<feature type="chain" id="PRO_1000025112" description="Gas vesicle protein A">
    <location>
        <begin position="1"/>
        <end position="72"/>
    </location>
</feature>
<comment type="function">
    <text evidence="1">Gas vesicles are hollow, gas filled proteinaceous nanostructures found in some microorganisms. During planktonic growth they allow positioning of the organism at a favorable depth for light or nutrient acquisition. GvpA forms the protein shell.</text>
</comment>
<comment type="subunit">
    <text evidence="1">The gas vesicle shell is 2 nm thick and consists of a single layer of this protein. It forms helical ribs nearly perpendicular to the long axis of the vesicle.</text>
</comment>
<comment type="subcellular location">
    <subcellularLocation>
        <location evidence="1">Gas vesicle shell</location>
    </subcellularLocation>
</comment>
<comment type="similarity">
    <text evidence="1">Belongs to the gas vesicle GvpA family.</text>
</comment>
<reference key="1">
    <citation type="journal article" date="2007" name="ISME J.">
        <title>Population level functional diversity in a microbial community revealed by comparative genomic and metagenomic analyses.</title>
        <authorList>
            <person name="Bhaya D."/>
            <person name="Grossman A.R."/>
            <person name="Steunou A.-S."/>
            <person name="Khuri N."/>
            <person name="Cohan F.M."/>
            <person name="Hamamura N."/>
            <person name="Melendrez M.C."/>
            <person name="Bateson M.M."/>
            <person name="Ward D.M."/>
            <person name="Heidelberg J.F."/>
        </authorList>
    </citation>
    <scope>NUCLEOTIDE SEQUENCE [LARGE SCALE GENOMIC DNA]</scope>
    <source>
        <strain>JA-3-3Ab</strain>
    </source>
</reference>
<name>GVPA_SYNJA</name>
<gene>
    <name evidence="1 2" type="primary">gvpA</name>
    <name type="ordered locus">CYA_0829</name>
</gene>
<dbReference type="EMBL" id="CP000239">
    <property type="protein sequence ID" value="ABC99033.1"/>
    <property type="molecule type" value="Genomic_DNA"/>
</dbReference>
<dbReference type="RefSeq" id="WP_011429717.1">
    <property type="nucleotide sequence ID" value="NC_007775.1"/>
</dbReference>
<dbReference type="SMR" id="Q2JW39"/>
<dbReference type="STRING" id="321327.CYA_0829"/>
<dbReference type="KEGG" id="cya:CYA_0829"/>
<dbReference type="eggNOG" id="ENOG5032YMQ">
    <property type="taxonomic scope" value="Bacteria"/>
</dbReference>
<dbReference type="HOGENOM" id="CLU_169045_1_0_3"/>
<dbReference type="OrthoDB" id="284387at2"/>
<dbReference type="Proteomes" id="UP000008818">
    <property type="component" value="Chromosome"/>
</dbReference>
<dbReference type="GO" id="GO:0033172">
    <property type="term" value="C:gas vesicle shell"/>
    <property type="evidence" value="ECO:0007669"/>
    <property type="project" value="UniProtKB-UniRule"/>
</dbReference>
<dbReference type="GO" id="GO:0012506">
    <property type="term" value="C:vesicle membrane"/>
    <property type="evidence" value="ECO:0007669"/>
    <property type="project" value="InterPro"/>
</dbReference>
<dbReference type="GO" id="GO:0005198">
    <property type="term" value="F:structural molecule activity"/>
    <property type="evidence" value="ECO:0007669"/>
    <property type="project" value="InterPro"/>
</dbReference>
<dbReference type="HAMAP" id="MF_00576">
    <property type="entry name" value="Gas_vesicle_A"/>
    <property type="match status" value="1"/>
</dbReference>
<dbReference type="InterPro" id="IPR000638">
    <property type="entry name" value="Gas-vesicle_GvpA-like"/>
</dbReference>
<dbReference type="InterPro" id="IPR047870">
    <property type="entry name" value="Gas_vesicle_GvpA"/>
</dbReference>
<dbReference type="InterPro" id="IPR050530">
    <property type="entry name" value="GvpA"/>
</dbReference>
<dbReference type="InterPro" id="IPR018493">
    <property type="entry name" value="GvpA-like_CS"/>
</dbReference>
<dbReference type="NCBIfam" id="NF006874">
    <property type="entry name" value="PRK09371.1"/>
    <property type="match status" value="1"/>
</dbReference>
<dbReference type="PANTHER" id="PTHR35344:SF4">
    <property type="entry name" value="GAS VESICLE PROTEIN A1"/>
    <property type="match status" value="1"/>
</dbReference>
<dbReference type="PANTHER" id="PTHR35344">
    <property type="entry name" value="GAS VESICLE STRUCTURAL PROTEIN 2-RELATED"/>
    <property type="match status" value="1"/>
</dbReference>
<dbReference type="Pfam" id="PF00741">
    <property type="entry name" value="Gas_vesicle"/>
    <property type="match status" value="1"/>
</dbReference>
<dbReference type="PROSITE" id="PS00234">
    <property type="entry name" value="GAS_VESICLE_A_1"/>
    <property type="match status" value="1"/>
</dbReference>
<dbReference type="PROSITE" id="PS00669">
    <property type="entry name" value="GAS_VESICLE_A_2"/>
    <property type="match status" value="1"/>
</dbReference>
<sequence length="72" mass="7513">MAVEKVNSSSSLAEVIDRILDKGIVVDAWVRVSLVGIELLAIEARVVVASVETYLKYAEAVGLTATAAAPAV</sequence>
<proteinExistence type="inferred from homology"/>
<organism>
    <name type="scientific">Synechococcus sp. (strain JA-3-3Ab)</name>
    <name type="common">Cyanobacteria bacterium Yellowstone A-Prime</name>
    <dbReference type="NCBI Taxonomy" id="321327"/>
    <lineage>
        <taxon>Bacteria</taxon>
        <taxon>Bacillati</taxon>
        <taxon>Cyanobacteriota</taxon>
        <taxon>Cyanophyceae</taxon>
        <taxon>Synechococcales</taxon>
        <taxon>Synechococcaceae</taxon>
        <taxon>Synechococcus</taxon>
    </lineage>
</organism>
<protein>
    <recommendedName>
        <fullName evidence="1">Gas vesicle protein A</fullName>
        <shortName evidence="1">GvpA</shortName>
    </recommendedName>
</protein>
<keyword id="KW-0304">Gas vesicle</keyword>
<accession>Q2JW39</accession>
<evidence type="ECO:0000255" key="1">
    <source>
        <dbReference type="HAMAP-Rule" id="MF_00576"/>
    </source>
</evidence>
<evidence type="ECO:0000303" key="2">
    <source>
    </source>
</evidence>